<sequence>MPTIIMDSCNYTRLGLSDYMSSKGVKKKNITSVSDIEQLQQRCEQLKPGVVFINEDCFIHETDSSERIRSIINQHPETLFFIFMAISNIHFEEYLYVRKNLIITSKAIKPSTLDSLLSTYLQKKLNMSPRISSGLDVHPLTLSQTESNMLKMWMSGHDTIQISDKMQIKAKTVSSHKGNIKRKIKTHNKQVIYHVVRLTDNVTSGIYVNVR</sequence>
<feature type="chain" id="PRO_0000184183" description="Transcriptional regulatory protein RcsA">
    <location>
        <begin position="1"/>
        <end position="211"/>
    </location>
</feature>
<feature type="domain" description="HTH luxR-type" evidence="1">
    <location>
        <begin position="135"/>
        <end position="200"/>
    </location>
</feature>
<feature type="DNA-binding region" description="H-T-H motif" evidence="1">
    <location>
        <begin position="159"/>
        <end position="178"/>
    </location>
</feature>
<reference key="1">
    <citation type="journal article" date="1991" name="Mol. Gen. Genet.">
        <title>Structural and functional analysis of the rcsA gene from Erwinia stewartii.</title>
        <authorList>
            <person name="Poetter K."/>
            <person name="Coplin D.L."/>
        </authorList>
    </citation>
    <scope>NUCLEOTIDE SEQUENCE [GENOMIC DNA]</scope>
    <source>
        <strain>SS104</strain>
    </source>
</reference>
<proteinExistence type="inferred from homology"/>
<organism>
    <name type="scientific">Pantoea stewartii subsp. stewartii</name>
    <name type="common">Erwinia stewartii</name>
    <dbReference type="NCBI Taxonomy" id="66271"/>
    <lineage>
        <taxon>Bacteria</taxon>
        <taxon>Pseudomonadati</taxon>
        <taxon>Pseudomonadota</taxon>
        <taxon>Gammaproteobacteria</taxon>
        <taxon>Enterobacterales</taxon>
        <taxon>Erwiniaceae</taxon>
        <taxon>Pantoea</taxon>
    </lineage>
</organism>
<dbReference type="EMBL" id="X58707">
    <property type="protein sequence ID" value="CAA41544.1"/>
    <property type="molecule type" value="Genomic_DNA"/>
</dbReference>
<dbReference type="PIR" id="S17701">
    <property type="entry name" value="S17701"/>
</dbReference>
<dbReference type="RefSeq" id="WP_006119584.1">
    <property type="nucleotide sequence ID" value="NZ_SGSP01000017.1"/>
</dbReference>
<dbReference type="SMR" id="P27488"/>
<dbReference type="GeneID" id="61251509"/>
<dbReference type="GO" id="GO:0003677">
    <property type="term" value="F:DNA binding"/>
    <property type="evidence" value="ECO:0007669"/>
    <property type="project" value="UniProtKB-UniRule"/>
</dbReference>
<dbReference type="GO" id="GO:0006355">
    <property type="term" value="P:regulation of DNA-templated transcription"/>
    <property type="evidence" value="ECO:0007669"/>
    <property type="project" value="UniProtKB-UniRule"/>
</dbReference>
<dbReference type="CDD" id="cd06170">
    <property type="entry name" value="LuxR_C_like"/>
    <property type="match status" value="1"/>
</dbReference>
<dbReference type="Gene3D" id="3.40.50.2300">
    <property type="match status" value="1"/>
</dbReference>
<dbReference type="HAMAP" id="MF_00982">
    <property type="entry name" value="RcsA"/>
    <property type="match status" value="1"/>
</dbReference>
<dbReference type="InterPro" id="IPR030866">
    <property type="entry name" value="RcsA"/>
</dbReference>
<dbReference type="InterPro" id="IPR016032">
    <property type="entry name" value="Sig_transdc_resp-reg_C-effctor"/>
</dbReference>
<dbReference type="InterPro" id="IPR000792">
    <property type="entry name" value="Tscrpt_reg_LuxR_C"/>
</dbReference>
<dbReference type="NCBIfam" id="NF011940">
    <property type="entry name" value="PRK15411.1"/>
    <property type="match status" value="1"/>
</dbReference>
<dbReference type="Pfam" id="PF00196">
    <property type="entry name" value="GerE"/>
    <property type="match status" value="1"/>
</dbReference>
<dbReference type="PRINTS" id="PR00038">
    <property type="entry name" value="HTHLUXR"/>
</dbReference>
<dbReference type="SMART" id="SM00421">
    <property type="entry name" value="HTH_LUXR"/>
    <property type="match status" value="1"/>
</dbReference>
<dbReference type="SUPFAM" id="SSF46894">
    <property type="entry name" value="C-terminal effector domain of the bipartite response regulators"/>
    <property type="match status" value="1"/>
</dbReference>
<dbReference type="PROSITE" id="PS00622">
    <property type="entry name" value="HTH_LUXR_1"/>
    <property type="match status" value="1"/>
</dbReference>
<dbReference type="PROSITE" id="PS50043">
    <property type="entry name" value="HTH_LUXR_2"/>
    <property type="match status" value="1"/>
</dbReference>
<gene>
    <name evidence="1" type="primary">rcsA</name>
</gene>
<accession>P27488</accession>
<comment type="function">
    <text evidence="1">Component of the Rcs signaling system, which controls transcription of numerous genes. Binds to DNA to regulate expression of genes.</text>
</comment>
<comment type="similarity">
    <text evidence="1">Belongs to the RcsA family.</text>
</comment>
<name>RCSA_PANSE</name>
<keyword id="KW-0238">DNA-binding</keyword>
<keyword id="KW-0716">Sensory transduction</keyword>
<keyword id="KW-0804">Transcription</keyword>
<keyword id="KW-0805">Transcription regulation</keyword>
<protein>
    <recommendedName>
        <fullName evidence="1">Transcriptional regulatory protein RcsA</fullName>
    </recommendedName>
</protein>
<evidence type="ECO:0000255" key="1">
    <source>
        <dbReference type="HAMAP-Rule" id="MF_00982"/>
    </source>
</evidence>